<gene>
    <name type="primary">COX6C</name>
</gene>
<evidence type="ECO:0000250" key="1">
    <source>
        <dbReference type="UniProtKB" id="P04038"/>
    </source>
</evidence>
<evidence type="ECO:0000269" key="2">
    <source>
    </source>
</evidence>
<evidence type="ECO:0000269" key="3">
    <source>
    </source>
</evidence>
<evidence type="ECO:0000305" key="4"/>
<sequence length="75" mass="8781">MAPEVLPKPRMRGLLARRLRNHMAVAFVLSLGVAALYKFRVADQRKKAYADFYRNYDVMKDFEEMRKAGIFQSVK</sequence>
<dbReference type="EMBL" id="X13238">
    <property type="protein sequence ID" value="CAA31624.1"/>
    <property type="molecule type" value="mRNA"/>
</dbReference>
<dbReference type="EMBL" id="AF067637">
    <property type="protein sequence ID" value="AAC73061.1"/>
    <property type="molecule type" value="Genomic_DNA"/>
</dbReference>
<dbReference type="EMBL" id="AF067636">
    <property type="protein sequence ID" value="AAC73061.1"/>
    <property type="status" value="JOINED"/>
    <property type="molecule type" value="Genomic_DNA"/>
</dbReference>
<dbReference type="EMBL" id="BT007007">
    <property type="protein sequence ID" value="AAP35653.1"/>
    <property type="molecule type" value="mRNA"/>
</dbReference>
<dbReference type="EMBL" id="AK311791">
    <property type="protein sequence ID" value="BAG34734.1"/>
    <property type="molecule type" value="mRNA"/>
</dbReference>
<dbReference type="EMBL" id="CH471060">
    <property type="protein sequence ID" value="EAW91791.1"/>
    <property type="molecule type" value="Genomic_DNA"/>
</dbReference>
<dbReference type="EMBL" id="BC000187">
    <property type="protein sequence ID" value="AAH00187.1"/>
    <property type="molecule type" value="mRNA"/>
</dbReference>
<dbReference type="CCDS" id="CCDS6284.1"/>
<dbReference type="PIR" id="S01960">
    <property type="entry name" value="OGHU6C"/>
</dbReference>
<dbReference type="RefSeq" id="NP_004365.1">
    <property type="nucleotide sequence ID" value="NM_004374.4"/>
</dbReference>
<dbReference type="RefSeq" id="XP_016868509.1">
    <property type="nucleotide sequence ID" value="XM_017013020.2"/>
</dbReference>
<dbReference type="RefSeq" id="XP_054215715.1">
    <property type="nucleotide sequence ID" value="XM_054359740.1"/>
</dbReference>
<dbReference type="PDB" id="5Z62">
    <property type="method" value="EM"/>
    <property type="resolution" value="3.60 A"/>
    <property type="chains" value="I=3-75"/>
</dbReference>
<dbReference type="PDBsum" id="5Z62"/>
<dbReference type="SMR" id="P09669"/>
<dbReference type="BioGRID" id="107738">
    <property type="interactions" value="144"/>
</dbReference>
<dbReference type="ComplexPortal" id="CPX-6123">
    <property type="entry name" value="Mitochondrial respiratory chain complex IV"/>
</dbReference>
<dbReference type="CORUM" id="P09669"/>
<dbReference type="FunCoup" id="P09669">
    <property type="interactions" value="615"/>
</dbReference>
<dbReference type="IntAct" id="P09669">
    <property type="interactions" value="59"/>
</dbReference>
<dbReference type="MINT" id="P09669"/>
<dbReference type="STRING" id="9606.ENSP00000429707"/>
<dbReference type="DrugBank" id="DB02659">
    <property type="generic name" value="Cholic Acid"/>
</dbReference>
<dbReference type="DrugBank" id="DB04464">
    <property type="generic name" value="N-Formylmethionine"/>
</dbReference>
<dbReference type="iPTMnet" id="P09669"/>
<dbReference type="PhosphoSitePlus" id="P09669"/>
<dbReference type="BioMuta" id="COX6C"/>
<dbReference type="jPOST" id="P09669"/>
<dbReference type="MassIVE" id="P09669"/>
<dbReference type="PaxDb" id="9606-ENSP00000428895"/>
<dbReference type="PeptideAtlas" id="P09669"/>
<dbReference type="ProteomicsDB" id="52263"/>
<dbReference type="Pumba" id="P09669"/>
<dbReference type="TopDownProteomics" id="P09669"/>
<dbReference type="Antibodypedia" id="4263">
    <property type="antibodies" value="247 antibodies from 30 providers"/>
</dbReference>
<dbReference type="DNASU" id="1345"/>
<dbReference type="Ensembl" id="ENST00000297564.6">
    <property type="protein sequence ID" value="ENSP00000297564.2"/>
    <property type="gene ID" value="ENSG00000164919.11"/>
</dbReference>
<dbReference type="Ensembl" id="ENST00000517682.6">
    <property type="protein sequence ID" value="ENSP00000429714.1"/>
    <property type="gene ID" value="ENSG00000164919.11"/>
</dbReference>
<dbReference type="Ensembl" id="ENST00000518171.5">
    <property type="protein sequence ID" value="ENSP00000429755.1"/>
    <property type="gene ID" value="ENSG00000164919.11"/>
</dbReference>
<dbReference type="Ensembl" id="ENST00000520271.5">
    <property type="protein sequence ID" value="ENSP00000428150.1"/>
    <property type="gene ID" value="ENSG00000164919.11"/>
</dbReference>
<dbReference type="Ensembl" id="ENST00000520468.7">
    <property type="protein sequence ID" value="ENSP00000428895.1"/>
    <property type="gene ID" value="ENSG00000164919.11"/>
</dbReference>
<dbReference type="Ensembl" id="ENST00000520517.5">
    <property type="protein sequence ID" value="ENSP00000429991.1"/>
    <property type="gene ID" value="ENSG00000164919.11"/>
</dbReference>
<dbReference type="Ensembl" id="ENST00000522934.5">
    <property type="protein sequence ID" value="ENSP00000428702.1"/>
    <property type="gene ID" value="ENSG00000164919.11"/>
</dbReference>
<dbReference type="Ensembl" id="ENST00000522940.5">
    <property type="protein sequence ID" value="ENSP00000428965.1"/>
    <property type="gene ID" value="ENSG00000164919.11"/>
</dbReference>
<dbReference type="Ensembl" id="ENST00000523016.1">
    <property type="protein sequence ID" value="ENSP00000429707.1"/>
    <property type="gene ID" value="ENSG00000164919.11"/>
</dbReference>
<dbReference type="Ensembl" id="ENST00000524245.5">
    <property type="protein sequence ID" value="ENSP00000429410.1"/>
    <property type="gene ID" value="ENSG00000164919.11"/>
</dbReference>
<dbReference type="GeneID" id="1345"/>
<dbReference type="KEGG" id="hsa:1345"/>
<dbReference type="MANE-Select" id="ENST00000520468.7">
    <property type="protein sequence ID" value="ENSP00000428895.1"/>
    <property type="RefSeq nucleotide sequence ID" value="NM_004374.4"/>
    <property type="RefSeq protein sequence ID" value="NP_004365.1"/>
</dbReference>
<dbReference type="UCSC" id="uc003yiy.3">
    <property type="organism name" value="human"/>
</dbReference>
<dbReference type="AGR" id="HGNC:2285"/>
<dbReference type="CTD" id="1345"/>
<dbReference type="DisGeNET" id="1345"/>
<dbReference type="GeneCards" id="COX6C"/>
<dbReference type="HGNC" id="HGNC:2285">
    <property type="gene designation" value="COX6C"/>
</dbReference>
<dbReference type="HPA" id="ENSG00000164919">
    <property type="expression patterns" value="Low tissue specificity"/>
</dbReference>
<dbReference type="MalaCards" id="COX6C"/>
<dbReference type="MIM" id="124090">
    <property type="type" value="gene"/>
</dbReference>
<dbReference type="neXtProt" id="NX_P09669"/>
<dbReference type="OpenTargets" id="ENSG00000164919"/>
<dbReference type="PharmGKB" id="PA26802"/>
<dbReference type="VEuPathDB" id="HostDB:ENSG00000164919"/>
<dbReference type="eggNOG" id="ENOG502SEI2">
    <property type="taxonomic scope" value="Eukaryota"/>
</dbReference>
<dbReference type="GeneTree" id="ENSGT00940000162275"/>
<dbReference type="HOGENOM" id="CLU_196254_0_0_1"/>
<dbReference type="InParanoid" id="P09669"/>
<dbReference type="OMA" id="KNYDAMK"/>
<dbReference type="OrthoDB" id="9514572at2759"/>
<dbReference type="PAN-GO" id="P09669">
    <property type="GO annotations" value="2 GO annotations based on evolutionary models"/>
</dbReference>
<dbReference type="PhylomeDB" id="P09669"/>
<dbReference type="TreeFam" id="TF353619"/>
<dbReference type="BioCyc" id="MetaCyc:HS09158-MONOMER"/>
<dbReference type="PathwayCommons" id="P09669"/>
<dbReference type="Reactome" id="R-HSA-5628897">
    <property type="pathway name" value="TP53 Regulates Metabolic Genes"/>
</dbReference>
<dbReference type="Reactome" id="R-HSA-611105">
    <property type="pathway name" value="Respiratory electron transport"/>
</dbReference>
<dbReference type="Reactome" id="R-HSA-9707564">
    <property type="pathway name" value="Cytoprotection by HMOX1"/>
</dbReference>
<dbReference type="Reactome" id="R-HSA-9864848">
    <property type="pathway name" value="Complex IV assembly"/>
</dbReference>
<dbReference type="SignaLink" id="P09669"/>
<dbReference type="SIGNOR" id="P09669"/>
<dbReference type="UniPathway" id="UPA00705"/>
<dbReference type="BioGRID-ORCS" id="1345">
    <property type="hits" value="348 hits in 1120 CRISPR screens"/>
</dbReference>
<dbReference type="CD-CODE" id="FB4E32DD">
    <property type="entry name" value="Presynaptic clusters and postsynaptic densities"/>
</dbReference>
<dbReference type="ChiTaRS" id="COX6C">
    <property type="organism name" value="human"/>
</dbReference>
<dbReference type="GeneWiki" id="COX6C"/>
<dbReference type="GenomeRNAi" id="1345"/>
<dbReference type="Pharos" id="P09669">
    <property type="development level" value="Tbio"/>
</dbReference>
<dbReference type="PRO" id="PR:P09669"/>
<dbReference type="Proteomes" id="UP000005640">
    <property type="component" value="Chromosome 8"/>
</dbReference>
<dbReference type="RNAct" id="P09669">
    <property type="molecule type" value="protein"/>
</dbReference>
<dbReference type="Bgee" id="ENSG00000164919">
    <property type="expression patterns" value="Expressed in pons and 215 other cell types or tissues"/>
</dbReference>
<dbReference type="ExpressionAtlas" id="P09669">
    <property type="expression patterns" value="baseline and differential"/>
</dbReference>
<dbReference type="GO" id="GO:0005743">
    <property type="term" value="C:mitochondrial inner membrane"/>
    <property type="evidence" value="ECO:0000318"/>
    <property type="project" value="GO_Central"/>
</dbReference>
<dbReference type="GO" id="GO:0005758">
    <property type="term" value="C:mitochondrial intermembrane space"/>
    <property type="evidence" value="ECO:0000304"/>
    <property type="project" value="Reactome"/>
</dbReference>
<dbReference type="GO" id="GO:0031966">
    <property type="term" value="C:mitochondrial membrane"/>
    <property type="evidence" value="ECO:0000314"/>
    <property type="project" value="ComplexPortal"/>
</dbReference>
<dbReference type="GO" id="GO:0005739">
    <property type="term" value="C:mitochondrion"/>
    <property type="evidence" value="ECO:0000314"/>
    <property type="project" value="HPA"/>
</dbReference>
<dbReference type="GO" id="GO:0045277">
    <property type="term" value="C:respiratory chain complex IV"/>
    <property type="evidence" value="ECO:0007669"/>
    <property type="project" value="Ensembl"/>
</dbReference>
<dbReference type="GO" id="GO:0045333">
    <property type="term" value="P:cellular respiration"/>
    <property type="evidence" value="ECO:0000303"/>
    <property type="project" value="ComplexPortal"/>
</dbReference>
<dbReference type="GO" id="GO:0006091">
    <property type="term" value="P:generation of precursor metabolites and energy"/>
    <property type="evidence" value="ECO:0000304"/>
    <property type="project" value="ProtInc"/>
</dbReference>
<dbReference type="GO" id="GO:0006123">
    <property type="term" value="P:mitochondrial electron transport, cytochrome c to oxygen"/>
    <property type="evidence" value="ECO:0000303"/>
    <property type="project" value="ComplexPortal"/>
</dbReference>
<dbReference type="CDD" id="cd22901">
    <property type="entry name" value="CcO_VIc"/>
    <property type="match status" value="1"/>
</dbReference>
<dbReference type="FunFam" id="4.10.93.10:FF:000001">
    <property type="entry name" value="Cytochrome c oxidase subunit 6C"/>
    <property type="match status" value="1"/>
</dbReference>
<dbReference type="Gene3D" id="4.10.93.10">
    <property type="entry name" value="Mitochondrial cytochrome c oxidase subunit VIc/VIIs"/>
    <property type="match status" value="1"/>
</dbReference>
<dbReference type="InterPro" id="IPR051389">
    <property type="entry name" value="Cytochrome_c_oxidase_VIc"/>
</dbReference>
<dbReference type="InterPro" id="IPR034884">
    <property type="entry name" value="Cytochrome_c_oxidase_VIc/VIIs"/>
</dbReference>
<dbReference type="InterPro" id="IPR037169">
    <property type="entry name" value="Cytochrome_c_oxidase_VIc_sf"/>
</dbReference>
<dbReference type="PANTHER" id="PTHR48416">
    <property type="entry name" value="CYTOCHROME C OXIDASE SUBUNIT 6C"/>
    <property type="match status" value="1"/>
</dbReference>
<dbReference type="PANTHER" id="PTHR48416:SF1">
    <property type="entry name" value="CYTOCHROME C OXIDASE SUBUNIT 6C"/>
    <property type="match status" value="1"/>
</dbReference>
<dbReference type="Pfam" id="PF02937">
    <property type="entry name" value="COX6C"/>
    <property type="match status" value="1"/>
</dbReference>
<dbReference type="SUPFAM" id="SSF81415">
    <property type="entry name" value="Mitochondrial cytochrome c oxidase subunit VIc"/>
    <property type="match status" value="1"/>
</dbReference>
<protein>
    <recommendedName>
        <fullName>Cytochrome c oxidase subunit 6C</fullName>
    </recommendedName>
    <alternativeName>
        <fullName>Cytochrome c oxidase polypeptide VIc</fullName>
    </alternativeName>
</protein>
<keyword id="KW-0002">3D-structure</keyword>
<keyword id="KW-0903">Direct protein sequencing</keyword>
<keyword id="KW-0472">Membrane</keyword>
<keyword id="KW-0496">Mitochondrion</keyword>
<keyword id="KW-0999">Mitochondrion inner membrane</keyword>
<keyword id="KW-1267">Proteomics identification</keyword>
<keyword id="KW-1185">Reference proteome</keyword>
<keyword id="KW-0812">Transmembrane</keyword>
<keyword id="KW-1133">Transmembrane helix</keyword>
<feature type="chain" id="PRO_0000006131" description="Cytochrome c oxidase subunit 6C">
    <location>
        <begin position="1"/>
        <end position="75"/>
    </location>
</feature>
<feature type="topological domain" description="Mitochondrial matrix" evidence="3">
    <location>
        <begin position="1"/>
        <end position="13"/>
    </location>
</feature>
<feature type="transmembrane region" description="Helical" evidence="1">
    <location>
        <begin position="14"/>
        <end position="54"/>
    </location>
</feature>
<feature type="topological domain" description="Mitochondrial intermembrane" evidence="3">
    <location>
        <begin position="55"/>
        <end position="75"/>
    </location>
</feature>
<comment type="function">
    <text evidence="1">Component of the cytochrome c oxidase, the last enzyme in the mitochondrial electron transport chain which drives oxidative phosphorylation. The respiratory chain contains 3 multisubunit complexes succinate dehydrogenase (complex II, CII), ubiquinol-cytochrome c oxidoreductase (cytochrome b-c1 complex, complex III, CIII) and cytochrome c oxidase (complex IV, CIV), that cooperate to transfer electrons derived from NADH and succinate to molecular oxygen, creating an electrochemical gradient over the inner membrane that drives transmembrane transport and the ATP synthase. Cytochrome c oxidase is the component of the respiratory chain that catalyzes the reduction of oxygen to water. Electrons originating from reduced cytochrome c in the intermembrane space (IMS) are transferred via the dinuclear copper A center (CU(A)) of subunit 2 and heme A of subunit 1 to the active site in subunit 1, a binuclear center (BNC) formed by heme A3 and copper B (CU(B)). The BNC reduces molecular oxygen to 2 water molecules using 4 electrons from cytochrome c in the IMS and 4 protons from the mitochondrial matrix.</text>
</comment>
<comment type="pathway">
    <text evidence="1">Energy metabolism; oxidative phosphorylation.</text>
</comment>
<comment type="subunit">
    <text evidence="2 3">Component of the cytochrome c oxidase (complex IV, CIV), a multisubunit enzyme composed of 14 subunits. The complex is composed of a catalytic core of 3 subunits MT-CO1, MT-CO2 and MT-CO3, encoded in the mitochondrial DNA, and 11 supernumerary subunits COX4I1 (or COX4I2), COX5A, COX5B, COX6A1 (or COX6A2), COX6B1 (or COX6B2), COX6C, COX7A2 (or COX7A1), COX7B, COX7C, COX8A and NDUFA4, which are encoded in the nuclear genome (PubMed:30030519). The complex exists as a monomer or a dimer and forms supercomplexes (SCs) in the inner mitochondrial membrane with NADH-ubiquinone oxidoreductase (complex I, CI) and ubiquinol-cytochrome c oxidoreductase (cytochrome b-c1 complex, complex III, CIII), resulting in different assemblies (supercomplex SCI(1)III(2)IV(1) and megacomplex MCI(2)III(2)IV(2)) (PubMed:28844695).</text>
</comment>
<comment type="interaction">
    <interactant intactId="EBI-715040">
        <id>P09669</id>
    </interactant>
    <interactant intactId="EBI-466029">
        <id>P42858</id>
        <label>HTT</label>
    </interactant>
    <organismsDiffer>false</organismsDiffer>
    <experiments>4</experiments>
</comment>
<comment type="interaction">
    <interactant intactId="EBI-715040">
        <id>P09669</id>
    </interactant>
    <interactant intactId="EBI-711613">
        <id>P21673</id>
        <label>SAT1</label>
    </interactant>
    <organismsDiffer>false</organismsDiffer>
    <experiments>3</experiments>
</comment>
<comment type="subcellular location">
    <subcellularLocation>
        <location evidence="3">Mitochondrion inner membrane</location>
        <topology evidence="3">Single-pass membrane protein</topology>
    </subcellularLocation>
</comment>
<comment type="similarity">
    <text evidence="4">Belongs to the cytochrome c oxidase subunit 6c family.</text>
</comment>
<comment type="online information" name="Atlas of Genetics and Cytogenetics in Oncology and Haematology">
    <link uri="https://atlasgeneticsoncology.org/gene/251/COX6C"/>
</comment>
<reference key="1">
    <citation type="journal article" date="1988" name="Nucleic Acids Res.">
        <title>Nucleotide sequence of cDNA encoding human cytochrome c oxidase subunit VIc.</title>
        <authorList>
            <person name="Otsuka M."/>
            <person name="Mizuno Y."/>
            <person name="Yoshida M."/>
            <person name="Kagawa Y."/>
            <person name="Ohta S."/>
        </authorList>
    </citation>
    <scope>NUCLEOTIDE SEQUENCE [MRNA]</scope>
</reference>
<reference key="2">
    <citation type="submission" date="1996-02" db="EMBL/GenBank/DDBJ databases">
        <authorList>
            <person name="Ohta S."/>
        </authorList>
    </citation>
    <scope>SEQUENCE REVISION TO 52</scope>
</reference>
<reference key="3">
    <citation type="journal article" date="1998" name="Cytogenet. Cell Genet.">
        <title>Assignment of the human genes coding for cytochrome c oxidase subunits Va (COX5A), VIc (COX6C) and VIIc (COX7C) to chromosome bands 15q25, 8q22--&gt;q23 and 5q14 and of three pseudogenes (COX5AP1, COX6CP1, COX7CP1) to 14q22, 16p12 and 13q14--&gt;q21 by FISH and radiation hybrid mapping.</title>
        <authorList>
            <person name="Hofmann S."/>
            <person name="Lichtner P."/>
            <person name="Schuffenhauer S."/>
            <person name="Gerbitz K.D."/>
            <person name="Meitinger T."/>
        </authorList>
    </citation>
    <scope>NUCLEOTIDE SEQUENCE [GENOMIC DNA]</scope>
</reference>
<reference key="4">
    <citation type="submission" date="2003-05" db="EMBL/GenBank/DDBJ databases">
        <title>Cloning of human full-length CDSs in BD Creator(TM) system donor vector.</title>
        <authorList>
            <person name="Kalnine N."/>
            <person name="Chen X."/>
            <person name="Rolfs A."/>
            <person name="Halleck A."/>
            <person name="Hines L."/>
            <person name="Eisenstein S."/>
            <person name="Koundinya M."/>
            <person name="Raphael J."/>
            <person name="Moreira D."/>
            <person name="Kelley T."/>
            <person name="LaBaer J."/>
            <person name="Lin Y."/>
            <person name="Phelan M."/>
            <person name="Farmer A."/>
        </authorList>
    </citation>
    <scope>NUCLEOTIDE SEQUENCE [LARGE SCALE MRNA]</scope>
</reference>
<reference key="5">
    <citation type="journal article" date="2004" name="Nat. Genet.">
        <title>Complete sequencing and characterization of 21,243 full-length human cDNAs.</title>
        <authorList>
            <person name="Ota T."/>
            <person name="Suzuki Y."/>
            <person name="Nishikawa T."/>
            <person name="Otsuki T."/>
            <person name="Sugiyama T."/>
            <person name="Irie R."/>
            <person name="Wakamatsu A."/>
            <person name="Hayashi K."/>
            <person name="Sato H."/>
            <person name="Nagai K."/>
            <person name="Kimura K."/>
            <person name="Makita H."/>
            <person name="Sekine M."/>
            <person name="Obayashi M."/>
            <person name="Nishi T."/>
            <person name="Shibahara T."/>
            <person name="Tanaka T."/>
            <person name="Ishii S."/>
            <person name="Yamamoto J."/>
            <person name="Saito K."/>
            <person name="Kawai Y."/>
            <person name="Isono Y."/>
            <person name="Nakamura Y."/>
            <person name="Nagahari K."/>
            <person name="Murakami K."/>
            <person name="Yasuda T."/>
            <person name="Iwayanagi T."/>
            <person name="Wagatsuma M."/>
            <person name="Shiratori A."/>
            <person name="Sudo H."/>
            <person name="Hosoiri T."/>
            <person name="Kaku Y."/>
            <person name="Kodaira H."/>
            <person name="Kondo H."/>
            <person name="Sugawara M."/>
            <person name="Takahashi M."/>
            <person name="Kanda K."/>
            <person name="Yokoi T."/>
            <person name="Furuya T."/>
            <person name="Kikkawa E."/>
            <person name="Omura Y."/>
            <person name="Abe K."/>
            <person name="Kamihara K."/>
            <person name="Katsuta N."/>
            <person name="Sato K."/>
            <person name="Tanikawa M."/>
            <person name="Yamazaki M."/>
            <person name="Ninomiya K."/>
            <person name="Ishibashi T."/>
            <person name="Yamashita H."/>
            <person name="Murakawa K."/>
            <person name="Fujimori K."/>
            <person name="Tanai H."/>
            <person name="Kimata M."/>
            <person name="Watanabe M."/>
            <person name="Hiraoka S."/>
            <person name="Chiba Y."/>
            <person name="Ishida S."/>
            <person name="Ono Y."/>
            <person name="Takiguchi S."/>
            <person name="Watanabe S."/>
            <person name="Yosida M."/>
            <person name="Hotuta T."/>
            <person name="Kusano J."/>
            <person name="Kanehori K."/>
            <person name="Takahashi-Fujii A."/>
            <person name="Hara H."/>
            <person name="Tanase T.-O."/>
            <person name="Nomura Y."/>
            <person name="Togiya S."/>
            <person name="Komai F."/>
            <person name="Hara R."/>
            <person name="Takeuchi K."/>
            <person name="Arita M."/>
            <person name="Imose N."/>
            <person name="Musashino K."/>
            <person name="Yuuki H."/>
            <person name="Oshima A."/>
            <person name="Sasaki N."/>
            <person name="Aotsuka S."/>
            <person name="Yoshikawa Y."/>
            <person name="Matsunawa H."/>
            <person name="Ichihara T."/>
            <person name="Shiohata N."/>
            <person name="Sano S."/>
            <person name="Moriya S."/>
            <person name="Momiyama H."/>
            <person name="Satoh N."/>
            <person name="Takami S."/>
            <person name="Terashima Y."/>
            <person name="Suzuki O."/>
            <person name="Nakagawa S."/>
            <person name="Senoh A."/>
            <person name="Mizoguchi H."/>
            <person name="Goto Y."/>
            <person name="Shimizu F."/>
            <person name="Wakebe H."/>
            <person name="Hishigaki H."/>
            <person name="Watanabe T."/>
            <person name="Sugiyama A."/>
            <person name="Takemoto M."/>
            <person name="Kawakami B."/>
            <person name="Yamazaki M."/>
            <person name="Watanabe K."/>
            <person name="Kumagai A."/>
            <person name="Itakura S."/>
            <person name="Fukuzumi Y."/>
            <person name="Fujimori Y."/>
            <person name="Komiyama M."/>
            <person name="Tashiro H."/>
            <person name="Tanigami A."/>
            <person name="Fujiwara T."/>
            <person name="Ono T."/>
            <person name="Yamada K."/>
            <person name="Fujii Y."/>
            <person name="Ozaki K."/>
            <person name="Hirao M."/>
            <person name="Ohmori Y."/>
            <person name="Kawabata A."/>
            <person name="Hikiji T."/>
            <person name="Kobatake N."/>
            <person name="Inagaki H."/>
            <person name="Ikema Y."/>
            <person name="Okamoto S."/>
            <person name="Okitani R."/>
            <person name="Kawakami T."/>
            <person name="Noguchi S."/>
            <person name="Itoh T."/>
            <person name="Shigeta K."/>
            <person name="Senba T."/>
            <person name="Matsumura K."/>
            <person name="Nakajima Y."/>
            <person name="Mizuno T."/>
            <person name="Morinaga M."/>
            <person name="Sasaki M."/>
            <person name="Togashi T."/>
            <person name="Oyama M."/>
            <person name="Hata H."/>
            <person name="Watanabe M."/>
            <person name="Komatsu T."/>
            <person name="Mizushima-Sugano J."/>
            <person name="Satoh T."/>
            <person name="Shirai Y."/>
            <person name="Takahashi Y."/>
            <person name="Nakagawa K."/>
            <person name="Okumura K."/>
            <person name="Nagase T."/>
            <person name="Nomura N."/>
            <person name="Kikuchi H."/>
            <person name="Masuho Y."/>
            <person name="Yamashita R."/>
            <person name="Nakai K."/>
            <person name="Yada T."/>
            <person name="Nakamura Y."/>
            <person name="Ohara O."/>
            <person name="Isogai T."/>
            <person name="Sugano S."/>
        </authorList>
    </citation>
    <scope>NUCLEOTIDE SEQUENCE [LARGE SCALE MRNA]</scope>
    <source>
        <tissue>Brain</tissue>
    </source>
</reference>
<reference key="6">
    <citation type="submission" date="2005-07" db="EMBL/GenBank/DDBJ databases">
        <authorList>
            <person name="Mural R.J."/>
            <person name="Istrail S."/>
            <person name="Sutton G.G."/>
            <person name="Florea L."/>
            <person name="Halpern A.L."/>
            <person name="Mobarry C.M."/>
            <person name="Lippert R."/>
            <person name="Walenz B."/>
            <person name="Shatkay H."/>
            <person name="Dew I."/>
            <person name="Miller J.R."/>
            <person name="Flanigan M.J."/>
            <person name="Edwards N.J."/>
            <person name="Bolanos R."/>
            <person name="Fasulo D."/>
            <person name="Halldorsson B.V."/>
            <person name="Hannenhalli S."/>
            <person name="Turner R."/>
            <person name="Yooseph S."/>
            <person name="Lu F."/>
            <person name="Nusskern D.R."/>
            <person name="Shue B.C."/>
            <person name="Zheng X.H."/>
            <person name="Zhong F."/>
            <person name="Delcher A.L."/>
            <person name="Huson D.H."/>
            <person name="Kravitz S.A."/>
            <person name="Mouchard L."/>
            <person name="Reinert K."/>
            <person name="Remington K.A."/>
            <person name="Clark A.G."/>
            <person name="Waterman M.S."/>
            <person name="Eichler E.E."/>
            <person name="Adams M.D."/>
            <person name="Hunkapiller M.W."/>
            <person name="Myers E.W."/>
            <person name="Venter J.C."/>
        </authorList>
    </citation>
    <scope>NUCLEOTIDE SEQUENCE [LARGE SCALE GENOMIC DNA]</scope>
</reference>
<reference key="7">
    <citation type="journal article" date="2004" name="Genome Res.">
        <title>The status, quality, and expansion of the NIH full-length cDNA project: the Mammalian Gene Collection (MGC).</title>
        <authorList>
            <consortium name="The MGC Project Team"/>
        </authorList>
    </citation>
    <scope>NUCLEOTIDE SEQUENCE [LARGE SCALE MRNA]</scope>
    <source>
        <tissue>Eye</tissue>
    </source>
</reference>
<reference key="8">
    <citation type="journal article" date="2009" name="Proc. Natl. Acad. Sci. U.S.A.">
        <title>Global profiling of protease cleavage sites by chemoselective labeling of protein N-termini.</title>
        <authorList>
            <person name="Xu G."/>
            <person name="Shin S.B."/>
            <person name="Jaffrey S.R."/>
        </authorList>
    </citation>
    <scope>PROTEIN SEQUENCE [LARGE SCALE ANALYSIS] OF 2-11</scope>
    <source>
        <tissue>Leukemic T-cell</tissue>
    </source>
</reference>
<reference key="9">
    <citation type="journal article" date="2011" name="BMC Syst. Biol.">
        <title>Initial characterization of the human central proteome.</title>
        <authorList>
            <person name="Burkard T.R."/>
            <person name="Planyavsky M."/>
            <person name="Kaupe I."/>
            <person name="Breitwieser F.P."/>
            <person name="Buerckstuemmer T."/>
            <person name="Bennett K.L."/>
            <person name="Superti-Furga G."/>
            <person name="Colinge J."/>
        </authorList>
    </citation>
    <scope>IDENTIFICATION BY MASS SPECTROMETRY [LARGE SCALE ANALYSIS]</scope>
</reference>
<reference key="10">
    <citation type="journal article" date="2012" name="Proc. Natl. Acad. Sci. U.S.A.">
        <title>N-terminal acetylome analyses and functional insights of the N-terminal acetyltransferase NatB.</title>
        <authorList>
            <person name="Van Damme P."/>
            <person name="Lasa M."/>
            <person name="Polevoda B."/>
            <person name="Gazquez C."/>
            <person name="Elosegui-Artola A."/>
            <person name="Kim D.S."/>
            <person name="De Juan-Pardo E."/>
            <person name="Demeyer K."/>
            <person name="Hole K."/>
            <person name="Larrea E."/>
            <person name="Timmerman E."/>
            <person name="Prieto J."/>
            <person name="Arnesen T."/>
            <person name="Sherman F."/>
            <person name="Gevaert K."/>
            <person name="Aldabe R."/>
        </authorList>
    </citation>
    <scope>IDENTIFICATION BY MASS SPECTROMETRY [LARGE SCALE ANALYSIS]</scope>
</reference>
<reference key="11">
    <citation type="journal article" date="2015" name="Proteomics">
        <title>N-terminome analysis of the human mitochondrial proteome.</title>
        <authorList>
            <person name="Vaca Jacome A.S."/>
            <person name="Rabilloud T."/>
            <person name="Schaeffer-Reiss C."/>
            <person name="Rompais M."/>
            <person name="Ayoub D."/>
            <person name="Lane L."/>
            <person name="Bairoch A."/>
            <person name="Van Dorsselaer A."/>
            <person name="Carapito C."/>
        </authorList>
    </citation>
    <scope>IDENTIFICATION BY MASS SPECTROMETRY [LARGE SCALE ANALYSIS]</scope>
</reference>
<reference key="12">
    <citation type="journal article" date="2017" name="Cell">
        <title>Architecture of human mitochondrial respiratory megacomplex I2III2IV2.</title>
        <authorList>
            <person name="Guo R."/>
            <person name="Zong S."/>
            <person name="Wu M."/>
            <person name="Gu J."/>
            <person name="Yang M."/>
        </authorList>
    </citation>
    <scope>STRUCTURE BY ELECTRON MICROSCOPY (3.90 ANGSTROMS)</scope>
    <scope>SUBUNIT</scope>
</reference>
<reference key="13">
    <citation type="journal article" date="2018" name="Cell Res.">
        <title>Structure of the intact 14-subunit human cytochrome c oxidase.</title>
        <authorList>
            <person name="Zong S."/>
            <person name="Wu M."/>
            <person name="Gu J."/>
            <person name="Liu T."/>
            <person name="Guo R."/>
            <person name="Yang M."/>
        </authorList>
    </citation>
    <scope>STRUCTURE BY ELECTRON MICROSCOPY (3.60 ANGSTROMS) OF 3-75</scope>
</reference>
<accession>P09669</accession>
<accession>B2R4D7</accession>
<name>COX6C_HUMAN</name>
<organism>
    <name type="scientific">Homo sapiens</name>
    <name type="common">Human</name>
    <dbReference type="NCBI Taxonomy" id="9606"/>
    <lineage>
        <taxon>Eukaryota</taxon>
        <taxon>Metazoa</taxon>
        <taxon>Chordata</taxon>
        <taxon>Craniata</taxon>
        <taxon>Vertebrata</taxon>
        <taxon>Euteleostomi</taxon>
        <taxon>Mammalia</taxon>
        <taxon>Eutheria</taxon>
        <taxon>Euarchontoglires</taxon>
        <taxon>Primates</taxon>
        <taxon>Haplorrhini</taxon>
        <taxon>Catarrhini</taxon>
        <taxon>Hominidae</taxon>
        <taxon>Homo</taxon>
    </lineage>
</organism>
<proteinExistence type="evidence at protein level"/>